<keyword id="KW-0066">ATP synthesis</keyword>
<keyword id="KW-0067">ATP-binding</keyword>
<keyword id="KW-0997">Cell inner membrane</keyword>
<keyword id="KW-1003">Cell membrane</keyword>
<keyword id="KW-0139">CF(1)</keyword>
<keyword id="KW-0375">Hydrogen ion transport</keyword>
<keyword id="KW-0406">Ion transport</keyword>
<keyword id="KW-0472">Membrane</keyword>
<keyword id="KW-0547">Nucleotide-binding</keyword>
<keyword id="KW-1185">Reference proteome</keyword>
<keyword id="KW-1278">Translocase</keyword>
<keyword id="KW-0813">Transport</keyword>
<evidence type="ECO:0000255" key="1">
    <source>
        <dbReference type="HAMAP-Rule" id="MF_01347"/>
    </source>
</evidence>
<proteinExistence type="inferred from homology"/>
<reference key="1">
    <citation type="submission" date="2007-05" db="EMBL/GenBank/DDBJ databases">
        <title>Complete sequence of Geobacter uraniireducens Rf4.</title>
        <authorList>
            <consortium name="US DOE Joint Genome Institute"/>
            <person name="Copeland A."/>
            <person name="Lucas S."/>
            <person name="Lapidus A."/>
            <person name="Barry K."/>
            <person name="Detter J.C."/>
            <person name="Glavina del Rio T."/>
            <person name="Hammon N."/>
            <person name="Israni S."/>
            <person name="Dalin E."/>
            <person name="Tice H."/>
            <person name="Pitluck S."/>
            <person name="Chertkov O."/>
            <person name="Brettin T."/>
            <person name="Bruce D."/>
            <person name="Han C."/>
            <person name="Schmutz J."/>
            <person name="Larimer F."/>
            <person name="Land M."/>
            <person name="Hauser L."/>
            <person name="Kyrpides N."/>
            <person name="Mikhailova N."/>
            <person name="Shelobolina E."/>
            <person name="Aklujkar M."/>
            <person name="Lovley D."/>
            <person name="Richardson P."/>
        </authorList>
    </citation>
    <scope>NUCLEOTIDE SEQUENCE [LARGE SCALE GENOMIC DNA]</scope>
    <source>
        <strain>ATCC BAA-1134 / JCM 13001 / Rf4</strain>
    </source>
</reference>
<gene>
    <name evidence="1" type="primary">atpD</name>
    <name type="ordered locus">Gura_4263</name>
</gene>
<accession>A5G9D8</accession>
<organism>
    <name type="scientific">Geotalea uraniireducens (strain Rf4)</name>
    <name type="common">Geobacter uraniireducens</name>
    <dbReference type="NCBI Taxonomy" id="351605"/>
    <lineage>
        <taxon>Bacteria</taxon>
        <taxon>Pseudomonadati</taxon>
        <taxon>Thermodesulfobacteriota</taxon>
        <taxon>Desulfuromonadia</taxon>
        <taxon>Geobacterales</taxon>
        <taxon>Geobacteraceae</taxon>
        <taxon>Geotalea</taxon>
    </lineage>
</organism>
<name>ATPB_GEOUR</name>
<sequence>MSQNIGKISQVIGAVIDVEFEPGKLPPIYNALRVTNPSIDDKENNLVLEVAQHLGENSVRTIAMDSTDGLVRGQAAIDTGKQISVPVGRKTLGRILNVIGDPVDEMGPVGAEKEYGIHREAPAFVDQSTKVEAFTTGIKVVDLLAPYARGGKIGLFGGAGVGKTVLIMELINNIAMQHGGFSVFAGVGERTREGNDLWMEMKESGVLEKTALVYGQMNEPPGARARVALSALSIAEYFRDEEGQNVLLFIDNIFRFTQAGSEVSALLGRIPSAVGYQPTLATEMGELQERITSTNKGSITSVQAIYVPADDLTDPAPATAFAHLDATTVLSRQIAELGIYPAVDPLDSTSRILDPQVIGEEHYAIARQVQYVLQKYKDLQDIIAILGMDELSEEDKLVVARARKIQRFLSQPFHVAEAFTGAPGKYVELKDTIKGFQEIVAGKHDDVPEQAFYLVGTIEEAIEKAKTLAV</sequence>
<feature type="chain" id="PRO_1000086913" description="ATP synthase subunit beta">
    <location>
        <begin position="1"/>
        <end position="470"/>
    </location>
</feature>
<feature type="binding site" evidence="1">
    <location>
        <begin position="157"/>
        <end position="164"/>
    </location>
    <ligand>
        <name>ATP</name>
        <dbReference type="ChEBI" id="CHEBI:30616"/>
    </ligand>
</feature>
<dbReference type="EC" id="7.1.2.2" evidence="1"/>
<dbReference type="EMBL" id="CP000698">
    <property type="protein sequence ID" value="ABQ28406.1"/>
    <property type="molecule type" value="Genomic_DNA"/>
</dbReference>
<dbReference type="RefSeq" id="WP_011941036.1">
    <property type="nucleotide sequence ID" value="NC_009483.1"/>
</dbReference>
<dbReference type="SMR" id="A5G9D8"/>
<dbReference type="STRING" id="351605.Gura_4263"/>
<dbReference type="KEGG" id="gur:Gura_4263"/>
<dbReference type="HOGENOM" id="CLU_022398_0_2_7"/>
<dbReference type="OrthoDB" id="9801639at2"/>
<dbReference type="Proteomes" id="UP000006695">
    <property type="component" value="Chromosome"/>
</dbReference>
<dbReference type="GO" id="GO:0005886">
    <property type="term" value="C:plasma membrane"/>
    <property type="evidence" value="ECO:0007669"/>
    <property type="project" value="UniProtKB-SubCell"/>
</dbReference>
<dbReference type="GO" id="GO:0045259">
    <property type="term" value="C:proton-transporting ATP synthase complex"/>
    <property type="evidence" value="ECO:0007669"/>
    <property type="project" value="UniProtKB-KW"/>
</dbReference>
<dbReference type="GO" id="GO:0005524">
    <property type="term" value="F:ATP binding"/>
    <property type="evidence" value="ECO:0007669"/>
    <property type="project" value="UniProtKB-UniRule"/>
</dbReference>
<dbReference type="GO" id="GO:0016887">
    <property type="term" value="F:ATP hydrolysis activity"/>
    <property type="evidence" value="ECO:0007669"/>
    <property type="project" value="InterPro"/>
</dbReference>
<dbReference type="GO" id="GO:0046933">
    <property type="term" value="F:proton-transporting ATP synthase activity, rotational mechanism"/>
    <property type="evidence" value="ECO:0007669"/>
    <property type="project" value="UniProtKB-UniRule"/>
</dbReference>
<dbReference type="CDD" id="cd18110">
    <property type="entry name" value="ATP-synt_F1_beta_C"/>
    <property type="match status" value="1"/>
</dbReference>
<dbReference type="CDD" id="cd18115">
    <property type="entry name" value="ATP-synt_F1_beta_N"/>
    <property type="match status" value="1"/>
</dbReference>
<dbReference type="CDD" id="cd01133">
    <property type="entry name" value="F1-ATPase_beta_CD"/>
    <property type="match status" value="1"/>
</dbReference>
<dbReference type="FunFam" id="1.10.1140.10:FF:000001">
    <property type="entry name" value="ATP synthase subunit beta"/>
    <property type="match status" value="1"/>
</dbReference>
<dbReference type="FunFam" id="2.40.10.170:FF:000005">
    <property type="entry name" value="ATP synthase subunit beta"/>
    <property type="match status" value="1"/>
</dbReference>
<dbReference type="FunFam" id="3.40.50.300:FF:000026">
    <property type="entry name" value="ATP synthase subunit beta"/>
    <property type="match status" value="1"/>
</dbReference>
<dbReference type="Gene3D" id="2.40.10.170">
    <property type="match status" value="1"/>
</dbReference>
<dbReference type="Gene3D" id="1.10.1140.10">
    <property type="entry name" value="Bovine Mitochondrial F1-atpase, Atp Synthase Beta Chain, Chain D, domain 3"/>
    <property type="match status" value="1"/>
</dbReference>
<dbReference type="Gene3D" id="3.40.50.300">
    <property type="entry name" value="P-loop containing nucleotide triphosphate hydrolases"/>
    <property type="match status" value="1"/>
</dbReference>
<dbReference type="HAMAP" id="MF_01347">
    <property type="entry name" value="ATP_synth_beta_bact"/>
    <property type="match status" value="1"/>
</dbReference>
<dbReference type="InterPro" id="IPR003593">
    <property type="entry name" value="AAA+_ATPase"/>
</dbReference>
<dbReference type="InterPro" id="IPR055190">
    <property type="entry name" value="ATP-synt_VA_C"/>
</dbReference>
<dbReference type="InterPro" id="IPR005722">
    <property type="entry name" value="ATP_synth_F1_bsu"/>
</dbReference>
<dbReference type="InterPro" id="IPR020003">
    <property type="entry name" value="ATPase_a/bsu_AS"/>
</dbReference>
<dbReference type="InterPro" id="IPR050053">
    <property type="entry name" value="ATPase_alpha/beta_chains"/>
</dbReference>
<dbReference type="InterPro" id="IPR004100">
    <property type="entry name" value="ATPase_F1/V1/A1_a/bsu_N"/>
</dbReference>
<dbReference type="InterPro" id="IPR036121">
    <property type="entry name" value="ATPase_F1/V1/A1_a/bsu_N_sf"/>
</dbReference>
<dbReference type="InterPro" id="IPR000194">
    <property type="entry name" value="ATPase_F1/V1/A1_a/bsu_nucl-bd"/>
</dbReference>
<dbReference type="InterPro" id="IPR024034">
    <property type="entry name" value="ATPase_F1/V1_b/a_C"/>
</dbReference>
<dbReference type="InterPro" id="IPR027417">
    <property type="entry name" value="P-loop_NTPase"/>
</dbReference>
<dbReference type="NCBIfam" id="TIGR01039">
    <property type="entry name" value="atpD"/>
    <property type="match status" value="1"/>
</dbReference>
<dbReference type="PANTHER" id="PTHR15184">
    <property type="entry name" value="ATP SYNTHASE"/>
    <property type="match status" value="1"/>
</dbReference>
<dbReference type="PANTHER" id="PTHR15184:SF71">
    <property type="entry name" value="ATP SYNTHASE SUBUNIT BETA, MITOCHONDRIAL"/>
    <property type="match status" value="1"/>
</dbReference>
<dbReference type="Pfam" id="PF00006">
    <property type="entry name" value="ATP-synt_ab"/>
    <property type="match status" value="1"/>
</dbReference>
<dbReference type="Pfam" id="PF02874">
    <property type="entry name" value="ATP-synt_ab_N"/>
    <property type="match status" value="1"/>
</dbReference>
<dbReference type="Pfam" id="PF22919">
    <property type="entry name" value="ATP-synt_VA_C"/>
    <property type="match status" value="1"/>
</dbReference>
<dbReference type="PIRSF" id="PIRSF039072">
    <property type="entry name" value="ATPase_subunit_beta"/>
    <property type="match status" value="1"/>
</dbReference>
<dbReference type="SMART" id="SM00382">
    <property type="entry name" value="AAA"/>
    <property type="match status" value="1"/>
</dbReference>
<dbReference type="SUPFAM" id="SSF47917">
    <property type="entry name" value="C-terminal domain of alpha and beta subunits of F1 ATP synthase"/>
    <property type="match status" value="1"/>
</dbReference>
<dbReference type="SUPFAM" id="SSF50615">
    <property type="entry name" value="N-terminal domain of alpha and beta subunits of F1 ATP synthase"/>
    <property type="match status" value="1"/>
</dbReference>
<dbReference type="SUPFAM" id="SSF52540">
    <property type="entry name" value="P-loop containing nucleoside triphosphate hydrolases"/>
    <property type="match status" value="1"/>
</dbReference>
<dbReference type="PROSITE" id="PS00152">
    <property type="entry name" value="ATPASE_ALPHA_BETA"/>
    <property type="match status" value="1"/>
</dbReference>
<protein>
    <recommendedName>
        <fullName evidence="1">ATP synthase subunit beta</fullName>
        <ecNumber evidence="1">7.1.2.2</ecNumber>
    </recommendedName>
    <alternativeName>
        <fullName evidence="1">ATP synthase F1 sector subunit beta</fullName>
    </alternativeName>
    <alternativeName>
        <fullName evidence="1">F-ATPase subunit beta</fullName>
    </alternativeName>
</protein>
<comment type="function">
    <text evidence="1">Produces ATP from ADP in the presence of a proton gradient across the membrane. The catalytic sites are hosted primarily by the beta subunits.</text>
</comment>
<comment type="catalytic activity">
    <reaction evidence="1">
        <text>ATP + H2O + 4 H(+)(in) = ADP + phosphate + 5 H(+)(out)</text>
        <dbReference type="Rhea" id="RHEA:57720"/>
        <dbReference type="ChEBI" id="CHEBI:15377"/>
        <dbReference type="ChEBI" id="CHEBI:15378"/>
        <dbReference type="ChEBI" id="CHEBI:30616"/>
        <dbReference type="ChEBI" id="CHEBI:43474"/>
        <dbReference type="ChEBI" id="CHEBI:456216"/>
        <dbReference type="EC" id="7.1.2.2"/>
    </reaction>
</comment>
<comment type="subunit">
    <text evidence="1">F-type ATPases have 2 components, CF(1) - the catalytic core - and CF(0) - the membrane proton channel. CF(1) has five subunits: alpha(3), beta(3), gamma(1), delta(1), epsilon(1). CF(0) has three main subunits: a(1), b(2) and c(9-12). The alpha and beta chains form an alternating ring which encloses part of the gamma chain. CF(1) is attached to CF(0) by a central stalk formed by the gamma and epsilon chains, while a peripheral stalk is formed by the delta and b chains.</text>
</comment>
<comment type="subcellular location">
    <subcellularLocation>
        <location evidence="1">Cell inner membrane</location>
        <topology evidence="1">Peripheral membrane protein</topology>
    </subcellularLocation>
</comment>
<comment type="similarity">
    <text evidence="1">Belongs to the ATPase alpha/beta chains family.</text>
</comment>